<protein>
    <recommendedName>
        <fullName>Leucine aminopeptidase 2</fullName>
        <ecNumber>3.4.11.-</ecNumber>
    </recommendedName>
    <alternativeName>
        <fullName>Epoxide hydrolase</fullName>
        <ecNumber>3.3.2.10</ecNumber>
    </alternativeName>
    <alternativeName>
        <fullName>Leukotriene A-4 hydrolase homolog</fullName>
        <shortName>LTA-4 hydrolase</shortName>
    </alternativeName>
</protein>
<feature type="chain" id="PRO_0000324922" description="Leucine aminopeptidase 2">
    <location>
        <begin position="1"/>
        <end position="617"/>
    </location>
</feature>
<feature type="active site" description="Proton acceptor" evidence="3">
    <location>
        <position position="301"/>
    </location>
</feature>
<feature type="active site" description="Proton donor" evidence="3">
    <location>
        <position position="388"/>
    </location>
</feature>
<feature type="binding site" evidence="1">
    <location>
        <begin position="139"/>
        <end position="141"/>
    </location>
    <ligand>
        <name>a peptide</name>
        <dbReference type="ChEBI" id="CHEBI:60466"/>
    </ligand>
</feature>
<feature type="binding site" evidence="1">
    <location>
        <begin position="271"/>
        <end position="276"/>
    </location>
    <ligand>
        <name>a peptide</name>
        <dbReference type="ChEBI" id="CHEBI:60466"/>
    </ligand>
</feature>
<feature type="binding site" evidence="3">
    <location>
        <position position="300"/>
    </location>
    <ligand>
        <name>Zn(2+)</name>
        <dbReference type="ChEBI" id="CHEBI:29105"/>
        <note>catalytic</note>
    </ligand>
</feature>
<feature type="binding site" evidence="3">
    <location>
        <position position="304"/>
    </location>
    <ligand>
        <name>Zn(2+)</name>
        <dbReference type="ChEBI" id="CHEBI:29105"/>
        <note>catalytic</note>
    </ligand>
</feature>
<feature type="binding site" evidence="3">
    <location>
        <position position="323"/>
    </location>
    <ligand>
        <name>Zn(2+)</name>
        <dbReference type="ChEBI" id="CHEBI:29105"/>
        <note>catalytic</note>
    </ligand>
</feature>
<proteinExistence type="inferred from homology"/>
<name>LKHA4_ASPTN</name>
<organism>
    <name type="scientific">Aspergillus terreus (strain NIH 2624 / FGSC A1156)</name>
    <dbReference type="NCBI Taxonomy" id="341663"/>
    <lineage>
        <taxon>Eukaryota</taxon>
        <taxon>Fungi</taxon>
        <taxon>Dikarya</taxon>
        <taxon>Ascomycota</taxon>
        <taxon>Pezizomycotina</taxon>
        <taxon>Eurotiomycetes</taxon>
        <taxon>Eurotiomycetidae</taxon>
        <taxon>Eurotiales</taxon>
        <taxon>Aspergillaceae</taxon>
        <taxon>Aspergillus</taxon>
        <taxon>Aspergillus subgen. Circumdati</taxon>
    </lineage>
</organism>
<gene>
    <name type="ORF">ATEG_06861</name>
</gene>
<sequence>MATTINPPRDPNTLSNYNNWLSTHITANFDILFDQKKLVGNVIHKLKSITNAESTDIVLDTSHVDVTDVKVDGKPSVWELLPPVKPYGTALKIKLDQGVKMDEIVHVDISVKTTEKCTALQWLTPAQTSNKKHPYMFSQCQAIHARSIFPCQDTPDVKSTIDFNITSPLPVIASGLLVRDASGAPQTGGKNLYQFHQKVPIPSYLFALASGDISEAAIGPRSVVATSPDKLRECQWELEADTENFINAIEKIVYPYVWGEYNVLILPPSFPYGGMENPIFTFATPSIISKDRENVDVIAHELAHSWSGNLVTNASWEHFWLNEGWTVYLERRILAAVHGEAYRHFSAIIGWKALSDSVDHFGHDHEFTRLITDLKGKDPDDAFSSIPYEKGFNFLFHLENLVGKQKFDQFIPHYFTKFKGKSLDSYEFKATILDFFKSDAEASKLLNELDWDTWFYAPGLPPKPKFDTSLVDVVYDLAKKWQSIPESSFKPQPSDIKDLTGNQIVVFLEQVLLFERPLAPELSKLMGEVYGLAKSANIEVANLYFRVGLNAGDESVFEPTADLLGKIGRMKFVRPLYRNLQKVNRPLAIETFEKNKDFYHPICRAMVEKDLFGKKDA</sequence>
<keyword id="KW-0963">Cytoplasm</keyword>
<keyword id="KW-0378">Hydrolase</keyword>
<keyword id="KW-0479">Metal-binding</keyword>
<keyword id="KW-0482">Metalloprotease</keyword>
<keyword id="KW-0539">Nucleus</keyword>
<keyword id="KW-0645">Protease</keyword>
<keyword id="KW-1185">Reference proteome</keyword>
<keyword id="KW-0862">Zinc</keyword>
<reference key="1">
    <citation type="submission" date="2005-09" db="EMBL/GenBank/DDBJ databases">
        <title>Annotation of the Aspergillus terreus NIH2624 genome.</title>
        <authorList>
            <person name="Birren B.W."/>
            <person name="Lander E.S."/>
            <person name="Galagan J.E."/>
            <person name="Nusbaum C."/>
            <person name="Devon K."/>
            <person name="Henn M."/>
            <person name="Ma L.-J."/>
            <person name="Jaffe D.B."/>
            <person name="Butler J."/>
            <person name="Alvarez P."/>
            <person name="Gnerre S."/>
            <person name="Grabherr M."/>
            <person name="Kleber M."/>
            <person name="Mauceli E.W."/>
            <person name="Brockman W."/>
            <person name="Rounsley S."/>
            <person name="Young S.K."/>
            <person name="LaButti K."/>
            <person name="Pushparaj V."/>
            <person name="DeCaprio D."/>
            <person name="Crawford M."/>
            <person name="Koehrsen M."/>
            <person name="Engels R."/>
            <person name="Montgomery P."/>
            <person name="Pearson M."/>
            <person name="Howarth C."/>
            <person name="Larson L."/>
            <person name="Luoma S."/>
            <person name="White J."/>
            <person name="Alvarado L."/>
            <person name="Kodira C.D."/>
            <person name="Zeng Q."/>
            <person name="Oleary S."/>
            <person name="Yandava C."/>
            <person name="Denning D.W."/>
            <person name="Nierman W.C."/>
            <person name="Milne T."/>
            <person name="Madden K."/>
        </authorList>
    </citation>
    <scope>NUCLEOTIDE SEQUENCE [LARGE SCALE GENOMIC DNA]</scope>
    <source>
        <strain>NIH 2624 / FGSC A1156</strain>
    </source>
</reference>
<dbReference type="EC" id="3.4.11.-"/>
<dbReference type="EC" id="3.3.2.10"/>
<dbReference type="EMBL" id="CH476603">
    <property type="protein sequence ID" value="EAU32245.1"/>
    <property type="status" value="ALT_SEQ"/>
    <property type="molecule type" value="Genomic_DNA"/>
</dbReference>
<dbReference type="RefSeq" id="XP_001209547.1">
    <property type="nucleotide sequence ID" value="XM_001209547.1"/>
</dbReference>
<dbReference type="SMR" id="Q0CFY9"/>
<dbReference type="STRING" id="341663.Q0CFY9"/>
<dbReference type="MEROPS" id="M01.034"/>
<dbReference type="EnsemblFungi" id="EAU32245">
    <property type="protein sequence ID" value="EAU32245"/>
    <property type="gene ID" value="ATEG_06861"/>
</dbReference>
<dbReference type="GeneID" id="4319230"/>
<dbReference type="eggNOG" id="KOG1047">
    <property type="taxonomic scope" value="Eukaryota"/>
</dbReference>
<dbReference type="OrthoDB" id="79562at2759"/>
<dbReference type="Proteomes" id="UP000007963">
    <property type="component" value="Unassembled WGS sequence"/>
</dbReference>
<dbReference type="GO" id="GO:0005829">
    <property type="term" value="C:cytosol"/>
    <property type="evidence" value="ECO:0007669"/>
    <property type="project" value="TreeGrafter"/>
</dbReference>
<dbReference type="GO" id="GO:0000328">
    <property type="term" value="C:fungal-type vacuole lumen"/>
    <property type="evidence" value="ECO:0007669"/>
    <property type="project" value="EnsemblFungi"/>
</dbReference>
<dbReference type="GO" id="GO:0005771">
    <property type="term" value="C:multivesicular body"/>
    <property type="evidence" value="ECO:0007669"/>
    <property type="project" value="EnsemblFungi"/>
</dbReference>
<dbReference type="GO" id="GO:0005634">
    <property type="term" value="C:nucleus"/>
    <property type="evidence" value="ECO:0007669"/>
    <property type="project" value="UniProtKB-SubCell"/>
</dbReference>
<dbReference type="GO" id="GO:0061957">
    <property type="term" value="C:NVT complex"/>
    <property type="evidence" value="ECO:0007669"/>
    <property type="project" value="EnsemblFungi"/>
</dbReference>
<dbReference type="GO" id="GO:0004177">
    <property type="term" value="F:aminopeptidase activity"/>
    <property type="evidence" value="ECO:0000250"/>
    <property type="project" value="UniProtKB"/>
</dbReference>
<dbReference type="GO" id="GO:0004301">
    <property type="term" value="F:epoxide hydrolase activity"/>
    <property type="evidence" value="ECO:0000250"/>
    <property type="project" value="UniProtKB"/>
</dbReference>
<dbReference type="GO" id="GO:0008237">
    <property type="term" value="F:metallopeptidase activity"/>
    <property type="evidence" value="ECO:0007669"/>
    <property type="project" value="UniProtKB-KW"/>
</dbReference>
<dbReference type="GO" id="GO:0008270">
    <property type="term" value="F:zinc ion binding"/>
    <property type="evidence" value="ECO:0000250"/>
    <property type="project" value="UniProtKB"/>
</dbReference>
<dbReference type="GO" id="GO:0120113">
    <property type="term" value="P:cytoplasm to vacuole targeting by the NVT pathway"/>
    <property type="evidence" value="ECO:0007669"/>
    <property type="project" value="EnsemblFungi"/>
</dbReference>
<dbReference type="GO" id="GO:0006629">
    <property type="term" value="P:lipid metabolic process"/>
    <property type="evidence" value="ECO:0007669"/>
    <property type="project" value="EnsemblFungi"/>
</dbReference>
<dbReference type="GO" id="GO:0043171">
    <property type="term" value="P:peptide catabolic process"/>
    <property type="evidence" value="ECO:0000250"/>
    <property type="project" value="UniProtKB"/>
</dbReference>
<dbReference type="GO" id="GO:0030163">
    <property type="term" value="P:protein catabolic process"/>
    <property type="evidence" value="ECO:0007669"/>
    <property type="project" value="EnsemblFungi"/>
</dbReference>
<dbReference type="GO" id="GO:0006508">
    <property type="term" value="P:proteolysis"/>
    <property type="evidence" value="ECO:0007669"/>
    <property type="project" value="UniProtKB-KW"/>
</dbReference>
<dbReference type="CDD" id="cd09599">
    <property type="entry name" value="M1_LTA4H"/>
    <property type="match status" value="1"/>
</dbReference>
<dbReference type="FunFam" id="1.10.390.10:FF:000009">
    <property type="entry name" value="Leukotriene A(4) hydrolase"/>
    <property type="match status" value="1"/>
</dbReference>
<dbReference type="FunFam" id="1.25.40.320:FF:000001">
    <property type="entry name" value="Leukotriene A(4) hydrolase"/>
    <property type="match status" value="1"/>
</dbReference>
<dbReference type="FunFam" id="2.60.40.1730:FF:000004">
    <property type="entry name" value="Leukotriene A(4) hydrolase"/>
    <property type="match status" value="1"/>
</dbReference>
<dbReference type="FunFam" id="3.30.2010.30:FF:000001">
    <property type="entry name" value="Leukotriene A(4) hydrolase"/>
    <property type="match status" value="1"/>
</dbReference>
<dbReference type="Gene3D" id="3.30.2010.30">
    <property type="match status" value="1"/>
</dbReference>
<dbReference type="Gene3D" id="1.10.390.10">
    <property type="entry name" value="Neutral Protease Domain 2"/>
    <property type="match status" value="1"/>
</dbReference>
<dbReference type="Gene3D" id="1.25.40.320">
    <property type="entry name" value="Peptidase M1, leukotriene A4 hydrolase/aminopeptidase C-terminal domain"/>
    <property type="match status" value="1"/>
</dbReference>
<dbReference type="Gene3D" id="2.60.40.1730">
    <property type="entry name" value="tricorn interacting facor f3 domain"/>
    <property type="match status" value="1"/>
</dbReference>
<dbReference type="InterPro" id="IPR045357">
    <property type="entry name" value="Aminopeptidase_N-like_N"/>
</dbReference>
<dbReference type="InterPro" id="IPR042097">
    <property type="entry name" value="Aminopeptidase_N-like_N_sf"/>
</dbReference>
<dbReference type="InterPro" id="IPR016024">
    <property type="entry name" value="ARM-type_fold"/>
</dbReference>
<dbReference type="InterPro" id="IPR012777">
    <property type="entry name" value="LTA4H"/>
</dbReference>
<dbReference type="InterPro" id="IPR049980">
    <property type="entry name" value="LTA4H_cat"/>
</dbReference>
<dbReference type="InterPro" id="IPR038502">
    <property type="entry name" value="M1_LTA-4_hydro/amino_C_sf"/>
</dbReference>
<dbReference type="InterPro" id="IPR034015">
    <property type="entry name" value="M1_LTA4H"/>
</dbReference>
<dbReference type="InterPro" id="IPR001930">
    <property type="entry name" value="Peptidase_M1"/>
</dbReference>
<dbReference type="InterPro" id="IPR015211">
    <property type="entry name" value="Peptidase_M1_C"/>
</dbReference>
<dbReference type="InterPro" id="IPR014782">
    <property type="entry name" value="Peptidase_M1_dom"/>
</dbReference>
<dbReference type="InterPro" id="IPR027268">
    <property type="entry name" value="Peptidase_M4/M1_CTD_sf"/>
</dbReference>
<dbReference type="NCBIfam" id="TIGR02411">
    <property type="entry name" value="leuko_A4_hydro"/>
    <property type="match status" value="1"/>
</dbReference>
<dbReference type="PANTHER" id="PTHR45726">
    <property type="entry name" value="LEUKOTRIENE A-4 HYDROLASE"/>
    <property type="match status" value="1"/>
</dbReference>
<dbReference type="PANTHER" id="PTHR45726:SF3">
    <property type="entry name" value="LEUKOTRIENE A-4 HYDROLASE"/>
    <property type="match status" value="1"/>
</dbReference>
<dbReference type="Pfam" id="PF09127">
    <property type="entry name" value="Leuk-A4-hydro_C"/>
    <property type="match status" value="1"/>
</dbReference>
<dbReference type="Pfam" id="PF01433">
    <property type="entry name" value="Peptidase_M1"/>
    <property type="match status" value="1"/>
</dbReference>
<dbReference type="Pfam" id="PF17900">
    <property type="entry name" value="Peptidase_M1_N"/>
    <property type="match status" value="1"/>
</dbReference>
<dbReference type="PRINTS" id="PR00756">
    <property type="entry name" value="ALADIPTASE"/>
</dbReference>
<dbReference type="SMART" id="SM01263">
    <property type="entry name" value="Leuk-A4-hydro_C"/>
    <property type="match status" value="1"/>
</dbReference>
<dbReference type="SUPFAM" id="SSF48371">
    <property type="entry name" value="ARM repeat"/>
    <property type="match status" value="1"/>
</dbReference>
<dbReference type="SUPFAM" id="SSF63737">
    <property type="entry name" value="Leukotriene A4 hydrolase N-terminal domain"/>
    <property type="match status" value="1"/>
</dbReference>
<dbReference type="SUPFAM" id="SSF55486">
    <property type="entry name" value="Metalloproteases ('zincins'), catalytic domain"/>
    <property type="match status" value="1"/>
</dbReference>
<dbReference type="PROSITE" id="PS00142">
    <property type="entry name" value="ZINC_PROTEASE"/>
    <property type="match status" value="1"/>
</dbReference>
<comment type="function">
    <text evidence="2">Aminopeptidase that preferentially cleaves di- and tripeptides. Also has low epoxide hydrolase activity (in vitro). Can hydrolyze the epoxide leukotriene LTA(4) but it forms preferentially 5,6-dihydroxy-7,9,11,14-eicosatetraenoic acid rather than the cytokine leukotriene B(4) as the product compared to the homologous mammalian enzyme (in vitro).</text>
</comment>
<comment type="catalytic activity">
    <reaction evidence="2">
        <text>an epoxide + H2O = an ethanediol</text>
        <dbReference type="Rhea" id="RHEA:19037"/>
        <dbReference type="ChEBI" id="CHEBI:15377"/>
        <dbReference type="ChEBI" id="CHEBI:32955"/>
        <dbReference type="ChEBI" id="CHEBI:140594"/>
        <dbReference type="EC" id="3.3.2.10"/>
    </reaction>
</comment>
<comment type="cofactor">
    <cofactor evidence="2">
        <name>Zn(2+)</name>
        <dbReference type="ChEBI" id="CHEBI:29105"/>
    </cofactor>
    <text evidence="2">Binds 1 zinc ion per subunit.</text>
</comment>
<comment type="subcellular location">
    <subcellularLocation>
        <location evidence="2">Cytoplasm</location>
    </subcellularLocation>
    <subcellularLocation>
        <location evidence="2">Nucleus</location>
    </subcellularLocation>
</comment>
<comment type="similarity">
    <text evidence="4">Belongs to the peptidase M1 family.</text>
</comment>
<comment type="sequence caution" evidence="4">
    <conflict type="erroneous gene model prediction">
        <sequence resource="EMBL-CDS" id="EAU32245"/>
    </conflict>
</comment>
<comment type="sequence caution" evidence="4">
    <conflict type="erroneous initiation">
        <sequence resource="EMBL-CDS" id="EAU32245"/>
    </conflict>
    <text>Extended N-terminus.</text>
</comment>
<accession>Q0CFY9</accession>
<evidence type="ECO:0000250" key="1">
    <source>
        <dbReference type="UniProtKB" id="P09960"/>
    </source>
</evidence>
<evidence type="ECO:0000250" key="2">
    <source>
        <dbReference type="UniProtKB" id="Q10740"/>
    </source>
</evidence>
<evidence type="ECO:0000255" key="3">
    <source>
        <dbReference type="PROSITE-ProRule" id="PRU10095"/>
    </source>
</evidence>
<evidence type="ECO:0000305" key="4"/>